<keyword id="KW-0150">Chloroplast</keyword>
<keyword id="KW-0934">Plastid</keyword>
<keyword id="KW-0687">Ribonucleoprotein</keyword>
<keyword id="KW-0689">Ribosomal protein</keyword>
<keyword id="KW-0691">RNA editing</keyword>
<accession>Q85B65</accession>
<dbReference type="EMBL" id="AB086179">
    <property type="protein sequence ID" value="BAC55391.1"/>
    <property type="molecule type" value="Genomic_DNA"/>
</dbReference>
<dbReference type="EMBL" id="AB087473">
    <property type="protein sequence ID" value="BAC55491.1"/>
    <property type="molecule type" value="mRNA"/>
</dbReference>
<dbReference type="RefSeq" id="NP_777455.1">
    <property type="nucleotide sequence ID" value="NC_004543.1"/>
</dbReference>
<dbReference type="SMR" id="Q85B65"/>
<dbReference type="GeneID" id="2553414"/>
<dbReference type="GO" id="GO:0009507">
    <property type="term" value="C:chloroplast"/>
    <property type="evidence" value="ECO:0007669"/>
    <property type="project" value="UniProtKB-SubCell"/>
</dbReference>
<dbReference type="GO" id="GO:0005762">
    <property type="term" value="C:mitochondrial large ribosomal subunit"/>
    <property type="evidence" value="ECO:0007669"/>
    <property type="project" value="TreeGrafter"/>
</dbReference>
<dbReference type="GO" id="GO:0019843">
    <property type="term" value="F:rRNA binding"/>
    <property type="evidence" value="ECO:0007669"/>
    <property type="project" value="UniProtKB-UniRule"/>
</dbReference>
<dbReference type="GO" id="GO:0003735">
    <property type="term" value="F:structural constituent of ribosome"/>
    <property type="evidence" value="ECO:0007669"/>
    <property type="project" value="InterPro"/>
</dbReference>
<dbReference type="GO" id="GO:0016740">
    <property type="term" value="F:transferase activity"/>
    <property type="evidence" value="ECO:0007669"/>
    <property type="project" value="InterPro"/>
</dbReference>
<dbReference type="GO" id="GO:0032543">
    <property type="term" value="P:mitochondrial translation"/>
    <property type="evidence" value="ECO:0007669"/>
    <property type="project" value="TreeGrafter"/>
</dbReference>
<dbReference type="FunFam" id="4.10.950.10:FF:000001">
    <property type="entry name" value="50S ribosomal protein L2"/>
    <property type="match status" value="1"/>
</dbReference>
<dbReference type="FunFam" id="2.30.30.30:FF:000008">
    <property type="entry name" value="50S ribosomal protein L2, chloroplastic"/>
    <property type="match status" value="1"/>
</dbReference>
<dbReference type="Gene3D" id="2.30.30.30">
    <property type="match status" value="1"/>
</dbReference>
<dbReference type="Gene3D" id="2.40.50.140">
    <property type="entry name" value="Nucleic acid-binding proteins"/>
    <property type="match status" value="1"/>
</dbReference>
<dbReference type="Gene3D" id="4.10.950.10">
    <property type="entry name" value="Ribosomal protein L2, domain 3"/>
    <property type="match status" value="1"/>
</dbReference>
<dbReference type="HAMAP" id="MF_01320_B">
    <property type="entry name" value="Ribosomal_uL2_B"/>
    <property type="match status" value="1"/>
</dbReference>
<dbReference type="InterPro" id="IPR012340">
    <property type="entry name" value="NA-bd_OB-fold"/>
</dbReference>
<dbReference type="InterPro" id="IPR014722">
    <property type="entry name" value="Rib_uL2_dom2"/>
</dbReference>
<dbReference type="InterPro" id="IPR002171">
    <property type="entry name" value="Ribosomal_uL2"/>
</dbReference>
<dbReference type="InterPro" id="IPR005880">
    <property type="entry name" value="Ribosomal_uL2_bac/org-type"/>
</dbReference>
<dbReference type="InterPro" id="IPR022669">
    <property type="entry name" value="Ribosomal_uL2_C"/>
</dbReference>
<dbReference type="InterPro" id="IPR022671">
    <property type="entry name" value="Ribosomal_uL2_CS"/>
</dbReference>
<dbReference type="InterPro" id="IPR014726">
    <property type="entry name" value="Ribosomal_uL2_dom3"/>
</dbReference>
<dbReference type="InterPro" id="IPR022666">
    <property type="entry name" value="Ribosomal_uL2_RNA-bd_dom"/>
</dbReference>
<dbReference type="InterPro" id="IPR008991">
    <property type="entry name" value="Translation_prot_SH3-like_sf"/>
</dbReference>
<dbReference type="NCBIfam" id="TIGR01171">
    <property type="entry name" value="rplB_bact"/>
    <property type="match status" value="1"/>
</dbReference>
<dbReference type="PANTHER" id="PTHR13691:SF5">
    <property type="entry name" value="LARGE RIBOSOMAL SUBUNIT PROTEIN UL2M"/>
    <property type="match status" value="1"/>
</dbReference>
<dbReference type="PANTHER" id="PTHR13691">
    <property type="entry name" value="RIBOSOMAL PROTEIN L2"/>
    <property type="match status" value="1"/>
</dbReference>
<dbReference type="Pfam" id="PF00181">
    <property type="entry name" value="Ribosomal_L2"/>
    <property type="match status" value="1"/>
</dbReference>
<dbReference type="Pfam" id="PF03947">
    <property type="entry name" value="Ribosomal_L2_C"/>
    <property type="match status" value="1"/>
</dbReference>
<dbReference type="PIRSF" id="PIRSF002158">
    <property type="entry name" value="Ribosomal_L2"/>
    <property type="match status" value="1"/>
</dbReference>
<dbReference type="SMART" id="SM01383">
    <property type="entry name" value="Ribosomal_L2"/>
    <property type="match status" value="1"/>
</dbReference>
<dbReference type="SMART" id="SM01382">
    <property type="entry name" value="Ribosomal_L2_C"/>
    <property type="match status" value="1"/>
</dbReference>
<dbReference type="SUPFAM" id="SSF50249">
    <property type="entry name" value="Nucleic acid-binding proteins"/>
    <property type="match status" value="1"/>
</dbReference>
<dbReference type="SUPFAM" id="SSF50104">
    <property type="entry name" value="Translation proteins SH3-like domain"/>
    <property type="match status" value="1"/>
</dbReference>
<dbReference type="PROSITE" id="PS00467">
    <property type="entry name" value="RIBOSOMAL_L2"/>
    <property type="match status" value="1"/>
</dbReference>
<organism>
    <name type="scientific">Anthoceros angustus</name>
    <name type="common">Hornwort</name>
    <name type="synonym">Anthoceros formosae</name>
    <dbReference type="NCBI Taxonomy" id="48387"/>
    <lineage>
        <taxon>Eukaryota</taxon>
        <taxon>Viridiplantae</taxon>
        <taxon>Streptophyta</taxon>
        <taxon>Embryophyta</taxon>
        <taxon>Anthocerotophyta</taxon>
        <taxon>Anthocerotopsida</taxon>
        <taxon>Anthocerotidae</taxon>
        <taxon>Anthocerotales</taxon>
        <taxon>Anthocerotaceae</taxon>
        <taxon>Anthoceros</taxon>
    </lineage>
</organism>
<comment type="subunit">
    <text evidence="1">Part of the 50S ribosomal subunit.</text>
</comment>
<comment type="subcellular location">
    <subcellularLocation>
        <location>Plastid</location>
        <location>Chloroplast</location>
    </subcellularLocation>
</comment>
<comment type="RNA editing">
    <location>
        <position position="26" evidence="4 5"/>
    </location>
    <location>
        <position position="52" evidence="4 5"/>
    </location>
    <location>
        <position position="75" evidence="4 5"/>
    </location>
    <location>
        <position position="85" evidence="4 5"/>
    </location>
    <location>
        <position position="87" evidence="4 5"/>
    </location>
    <location>
        <position position="105" evidence="4 5"/>
    </location>
    <location>
        <position position="144" evidence="4 5"/>
    </location>
    <location>
        <position position="203" evidence="4 5"/>
    </location>
    <location>
        <position position="227" evidence="4 5"/>
    </location>
    <location>
        <position position="231" evidence="4 5"/>
    </location>
    <location>
        <position position="232" evidence="4 5"/>
    </location>
    <text>The nonsense codons at positions 26, 52 and 203 are modified to sense codons.</text>
</comment>
<comment type="similarity">
    <text evidence="6">Belongs to the universal ribosomal protein uL2 family.</text>
</comment>
<evidence type="ECO:0000250" key="1"/>
<evidence type="ECO:0000255" key="2">
    <source>
        <dbReference type="HAMAP-Rule" id="MF_01320"/>
    </source>
</evidence>
<evidence type="ECO:0000256" key="3">
    <source>
        <dbReference type="SAM" id="MobiDB-lite"/>
    </source>
</evidence>
<evidence type="ECO:0000269" key="4">
    <source>
    </source>
</evidence>
<evidence type="ECO:0000269" key="5">
    <source>
    </source>
</evidence>
<evidence type="ECO:0000305" key="6"/>
<geneLocation type="chloroplast"/>
<reference key="1">
    <citation type="journal article" date="2003" name="Nucleic Acids Res.">
        <title>The complete nucleotide sequence of the hornwort (Anthoceros formosae) chloroplast genome: insight into the earliest land plants.</title>
        <authorList>
            <person name="Kugita M."/>
            <person name="Kaneko A."/>
            <person name="Yamamoto Y."/>
            <person name="Takeya Y."/>
            <person name="Matsumoto T."/>
            <person name="Yoshinaga K."/>
        </authorList>
    </citation>
    <scope>NUCLEOTIDE SEQUENCE [LARGE SCALE GENOMIC DNA]</scope>
    <scope>RNA EDITING</scope>
</reference>
<reference key="2">
    <citation type="journal article" date="2003" name="Nucleic Acids Res.">
        <title>RNA editing in hornwort chloroplasts makes more than half the genes functional.</title>
        <authorList>
            <person name="Kugita M."/>
            <person name="Yamamoto Y."/>
            <person name="Fujikawa T."/>
            <person name="Matsumoto T."/>
            <person name="Yoshinaga K."/>
        </authorList>
    </citation>
    <scope>NUCLEOTIDE SEQUENCE [MRNA]</scope>
    <scope>RNA EDITING</scope>
    <source>
        <tissue>Thallus</tissue>
    </source>
</reference>
<name>RK2_ANTAG</name>
<feature type="chain" id="PRO_0000129663" description="Large ribosomal subunit protein uL2c">
    <location>
        <begin position="1"/>
        <end position="277"/>
    </location>
</feature>
<feature type="region of interest" description="Disordered" evidence="3">
    <location>
        <begin position="224"/>
        <end position="257"/>
    </location>
</feature>
<sequence>MVIRSYRAYTLGTRNRSVFEFEKKVRSKPQKKLTFRQHCKKGRNNRGIITSRHRGGGHKRIYRKIDFLRDKKDIFGRIATIEYDPNRNTFICLTYYEDGEKKYILYPQGMRIGDSVVSSTEAPISIGNALPLTNMPLGTAIHNVEITPGKGGQLARAAGAVAKIIAKEGRLATLRLPSGEVRLISQKCLATIGQVGNSDANNRTIGKAGSKRWLGKRPKVRGVVMNPIDHPHGGGEGRAPIGRKKPLTPWGHPALGRKTRRNKKYSDILIVRRRKNN</sequence>
<proteinExistence type="evidence at transcript level"/>
<gene>
    <name type="primary">rpl2</name>
</gene>
<protein>
    <recommendedName>
        <fullName evidence="2">Large ribosomal subunit protein uL2c</fullName>
    </recommendedName>
    <alternativeName>
        <fullName evidence="6">50S ribosomal protein L2, chloroplastic</fullName>
    </alternativeName>
</protein>